<name>FENR_RHOPA</name>
<gene>
    <name type="ordered locus">RPA3954</name>
</gene>
<comment type="catalytic activity">
    <reaction evidence="1">
        <text>2 reduced [2Fe-2S]-[ferredoxin] + NADP(+) + H(+) = 2 oxidized [2Fe-2S]-[ferredoxin] + NADPH</text>
        <dbReference type="Rhea" id="RHEA:20125"/>
        <dbReference type="Rhea" id="RHEA-COMP:10000"/>
        <dbReference type="Rhea" id="RHEA-COMP:10001"/>
        <dbReference type="ChEBI" id="CHEBI:15378"/>
        <dbReference type="ChEBI" id="CHEBI:33737"/>
        <dbReference type="ChEBI" id="CHEBI:33738"/>
        <dbReference type="ChEBI" id="CHEBI:57783"/>
        <dbReference type="ChEBI" id="CHEBI:58349"/>
        <dbReference type="EC" id="1.18.1.2"/>
    </reaction>
</comment>
<comment type="cofactor">
    <cofactor evidence="1">
        <name>FAD</name>
        <dbReference type="ChEBI" id="CHEBI:57692"/>
    </cofactor>
    <text evidence="1">Binds 1 FAD per subunit.</text>
</comment>
<comment type="subunit">
    <text evidence="1">Homodimer.</text>
</comment>
<comment type="similarity">
    <text evidence="1">Belongs to the ferredoxin--NADP reductase type 2 family.</text>
</comment>
<evidence type="ECO:0000255" key="1">
    <source>
        <dbReference type="HAMAP-Rule" id="MF_01685"/>
    </source>
</evidence>
<evidence type="ECO:0007829" key="2">
    <source>
        <dbReference type="PDB" id="5YGQ"/>
    </source>
</evidence>
<organism>
    <name type="scientific">Rhodopseudomonas palustris (strain ATCC BAA-98 / CGA009)</name>
    <dbReference type="NCBI Taxonomy" id="258594"/>
    <lineage>
        <taxon>Bacteria</taxon>
        <taxon>Pseudomonadati</taxon>
        <taxon>Pseudomonadota</taxon>
        <taxon>Alphaproteobacteria</taxon>
        <taxon>Hyphomicrobiales</taxon>
        <taxon>Nitrobacteraceae</taxon>
        <taxon>Rhodopseudomonas</taxon>
    </lineage>
</organism>
<proteinExistence type="evidence at protein level"/>
<accession>Q6N2U4</accession>
<sequence>MTETIKTDVLIVGAGPCGLFAVFELGLLDVKAHLVDILDKVGGQCAELYPEKPIYDIPGIPMVTGHGLTEALMEQIKPFNPTFHLSEMVENVEKIGDPGFRVTTNAGKVFECTVLVVAAGGGSFLPKRPPVPGVEAYEGTSVHYAVRKMEDFRGKDILIVGGGDSALDWTLNLNPIAKSMTLVHRRDDFRGAPHSVEQMRQLVASGKLDLKIGQITELQGDNGQLTGATVKLNDNTTSQIKCDAMLPFFGLTMKLGPVANWGLDLENNLIPVDTGTFETNVPGIFAIGDINTYPGKLKLILSGFHEGALMAQKAVKYVYPDKRVVFQYTTSSTNLQKKLGVN</sequence>
<feature type="chain" id="PRO_0000364913" description="Ferredoxin--NADP reductase">
    <location>
        <begin position="1"/>
        <end position="342"/>
    </location>
</feature>
<feature type="binding site" evidence="1">
    <location>
        <position position="17"/>
    </location>
    <ligand>
        <name>FAD</name>
        <dbReference type="ChEBI" id="CHEBI:57692"/>
    </ligand>
</feature>
<feature type="binding site" evidence="1">
    <location>
        <position position="36"/>
    </location>
    <ligand>
        <name>FAD</name>
        <dbReference type="ChEBI" id="CHEBI:57692"/>
    </ligand>
</feature>
<feature type="binding site" evidence="1">
    <location>
        <position position="44"/>
    </location>
    <ligand>
        <name>FAD</name>
        <dbReference type="ChEBI" id="CHEBI:57692"/>
    </ligand>
</feature>
<feature type="binding site" evidence="1">
    <location>
        <position position="49"/>
    </location>
    <ligand>
        <name>FAD</name>
        <dbReference type="ChEBI" id="CHEBI:57692"/>
    </ligand>
</feature>
<feature type="binding site" evidence="1">
    <location>
        <position position="89"/>
    </location>
    <ligand>
        <name>FAD</name>
        <dbReference type="ChEBI" id="CHEBI:57692"/>
    </ligand>
</feature>
<feature type="binding site" evidence="1">
    <location>
        <position position="124"/>
    </location>
    <ligand>
        <name>FAD</name>
        <dbReference type="ChEBI" id="CHEBI:57692"/>
    </ligand>
</feature>
<feature type="binding site" evidence="1">
    <location>
        <position position="289"/>
    </location>
    <ligand>
        <name>FAD</name>
        <dbReference type="ChEBI" id="CHEBI:57692"/>
    </ligand>
</feature>
<feature type="binding site" evidence="1">
    <location>
        <position position="330"/>
    </location>
    <ligand>
        <name>FAD</name>
        <dbReference type="ChEBI" id="CHEBI:57692"/>
    </ligand>
</feature>
<feature type="strand" evidence="2">
    <location>
        <begin position="5"/>
        <end position="12"/>
    </location>
</feature>
<feature type="helix" evidence="2">
    <location>
        <begin position="16"/>
        <end position="26"/>
    </location>
</feature>
<feature type="turn" evidence="2">
    <location>
        <begin position="27"/>
        <end position="29"/>
    </location>
</feature>
<feature type="strand" evidence="2">
    <location>
        <begin position="32"/>
        <end position="35"/>
    </location>
</feature>
<feature type="strand" evidence="2">
    <location>
        <begin position="37"/>
        <end position="42"/>
    </location>
</feature>
<feature type="helix" evidence="2">
    <location>
        <begin position="43"/>
        <end position="48"/>
    </location>
</feature>
<feature type="strand" evidence="2">
    <location>
        <begin position="52"/>
        <end position="54"/>
    </location>
</feature>
<feature type="helix" evidence="2">
    <location>
        <begin position="65"/>
        <end position="76"/>
    </location>
</feature>
<feature type="strand" evidence="2">
    <location>
        <begin position="82"/>
        <end position="84"/>
    </location>
</feature>
<feature type="strand" evidence="2">
    <location>
        <begin position="89"/>
        <end position="96"/>
    </location>
</feature>
<feature type="strand" evidence="2">
    <location>
        <begin position="99"/>
        <end position="104"/>
    </location>
</feature>
<feature type="strand" evidence="2">
    <location>
        <begin position="109"/>
        <end position="117"/>
    </location>
</feature>
<feature type="strand" evidence="2">
    <location>
        <begin position="123"/>
        <end position="126"/>
    </location>
</feature>
<feature type="turn" evidence="2">
    <location>
        <begin position="130"/>
        <end position="132"/>
    </location>
</feature>
<feature type="helix" evidence="2">
    <location>
        <begin position="136"/>
        <end position="138"/>
    </location>
</feature>
<feature type="turn" evidence="2">
    <location>
        <begin position="139"/>
        <end position="141"/>
    </location>
</feature>
<feature type="helix" evidence="2">
    <location>
        <begin position="149"/>
        <end position="152"/>
    </location>
</feature>
<feature type="strand" evidence="2">
    <location>
        <begin position="156"/>
        <end position="160"/>
    </location>
</feature>
<feature type="helix" evidence="2">
    <location>
        <begin position="164"/>
        <end position="173"/>
    </location>
</feature>
<feature type="turn" evidence="2">
    <location>
        <begin position="174"/>
        <end position="176"/>
    </location>
</feature>
<feature type="strand" evidence="2">
    <location>
        <begin position="178"/>
        <end position="187"/>
    </location>
</feature>
<feature type="helix" evidence="2">
    <location>
        <begin position="193"/>
        <end position="204"/>
    </location>
</feature>
<feature type="strand" evidence="2">
    <location>
        <begin position="209"/>
        <end position="219"/>
    </location>
</feature>
<feature type="strand" evidence="2">
    <location>
        <begin position="227"/>
        <end position="232"/>
    </location>
</feature>
<feature type="strand" evidence="2">
    <location>
        <begin position="237"/>
        <end position="241"/>
    </location>
</feature>
<feature type="strand" evidence="2">
    <location>
        <begin position="243"/>
        <end position="247"/>
    </location>
</feature>
<feature type="strand" evidence="2">
    <location>
        <begin position="251"/>
        <end position="254"/>
    </location>
</feature>
<feature type="helix" evidence="2">
    <location>
        <begin position="256"/>
        <end position="260"/>
    </location>
</feature>
<feature type="strand" evidence="2">
    <location>
        <begin position="269"/>
        <end position="271"/>
    </location>
</feature>
<feature type="turn" evidence="2">
    <location>
        <begin position="274"/>
        <end position="276"/>
    </location>
</feature>
<feature type="strand" evidence="2">
    <location>
        <begin position="284"/>
        <end position="286"/>
    </location>
</feature>
<feature type="helix" evidence="2">
    <location>
        <begin position="288"/>
        <end position="290"/>
    </location>
</feature>
<feature type="helix" evidence="2">
    <location>
        <begin position="300"/>
        <end position="318"/>
    </location>
</feature>
<feature type="turn" evidence="2">
    <location>
        <begin position="329"/>
        <end position="331"/>
    </location>
</feature>
<feature type="helix" evidence="2">
    <location>
        <begin position="333"/>
        <end position="339"/>
    </location>
</feature>
<dbReference type="EC" id="1.18.1.2" evidence="1"/>
<dbReference type="EMBL" id="BX572605">
    <property type="protein sequence ID" value="CAE29395.1"/>
    <property type="molecule type" value="Genomic_DNA"/>
</dbReference>
<dbReference type="RefSeq" id="WP_011159490.1">
    <property type="nucleotide sequence ID" value="NZ_CP116810.1"/>
</dbReference>
<dbReference type="PDB" id="5YGQ">
    <property type="method" value="X-ray"/>
    <property type="resolution" value="2.40 A"/>
    <property type="chains" value="A/B=1-342"/>
</dbReference>
<dbReference type="PDBsum" id="5YGQ"/>
<dbReference type="SMR" id="Q6N2U4"/>
<dbReference type="STRING" id="258594.RPA3954"/>
<dbReference type="GeneID" id="66895069"/>
<dbReference type="eggNOG" id="COG0492">
    <property type="taxonomic scope" value="Bacteria"/>
</dbReference>
<dbReference type="HOGENOM" id="CLU_031864_5_5_5"/>
<dbReference type="PhylomeDB" id="Q6N2U4"/>
<dbReference type="GO" id="GO:0004324">
    <property type="term" value="F:ferredoxin-NADP+ reductase activity"/>
    <property type="evidence" value="ECO:0007669"/>
    <property type="project" value="UniProtKB-UniRule"/>
</dbReference>
<dbReference type="GO" id="GO:0050660">
    <property type="term" value="F:flavin adenine dinucleotide binding"/>
    <property type="evidence" value="ECO:0007669"/>
    <property type="project" value="UniProtKB-UniRule"/>
</dbReference>
<dbReference type="GO" id="GO:0050661">
    <property type="term" value="F:NADP binding"/>
    <property type="evidence" value="ECO:0007669"/>
    <property type="project" value="UniProtKB-UniRule"/>
</dbReference>
<dbReference type="Gene3D" id="3.50.50.60">
    <property type="entry name" value="FAD/NAD(P)-binding domain"/>
    <property type="match status" value="2"/>
</dbReference>
<dbReference type="HAMAP" id="MF_01685">
    <property type="entry name" value="FENR2"/>
    <property type="match status" value="1"/>
</dbReference>
<dbReference type="InterPro" id="IPR036188">
    <property type="entry name" value="FAD/NAD-bd_sf"/>
</dbReference>
<dbReference type="InterPro" id="IPR023753">
    <property type="entry name" value="FAD/NAD-binding_dom"/>
</dbReference>
<dbReference type="InterPro" id="IPR022890">
    <property type="entry name" value="Fd--NADP_Rdtase_type_2"/>
</dbReference>
<dbReference type="InterPro" id="IPR050097">
    <property type="entry name" value="Ferredoxin-NADP_redctase_2"/>
</dbReference>
<dbReference type="PANTHER" id="PTHR48105">
    <property type="entry name" value="THIOREDOXIN REDUCTASE 1-RELATED-RELATED"/>
    <property type="match status" value="1"/>
</dbReference>
<dbReference type="Pfam" id="PF07992">
    <property type="entry name" value="Pyr_redox_2"/>
    <property type="match status" value="1"/>
</dbReference>
<dbReference type="PRINTS" id="PR00368">
    <property type="entry name" value="FADPNR"/>
</dbReference>
<dbReference type="PRINTS" id="PR00469">
    <property type="entry name" value="PNDRDTASEII"/>
</dbReference>
<dbReference type="SUPFAM" id="SSF51905">
    <property type="entry name" value="FAD/NAD(P)-binding domain"/>
    <property type="match status" value="1"/>
</dbReference>
<keyword id="KW-0002">3D-structure</keyword>
<keyword id="KW-0274">FAD</keyword>
<keyword id="KW-0285">Flavoprotein</keyword>
<keyword id="KW-0521">NADP</keyword>
<keyword id="KW-0560">Oxidoreductase</keyword>
<reference key="1">
    <citation type="journal article" date="2004" name="Nat. Biotechnol.">
        <title>Complete genome sequence of the metabolically versatile photosynthetic bacterium Rhodopseudomonas palustris.</title>
        <authorList>
            <person name="Larimer F.W."/>
            <person name="Chain P."/>
            <person name="Hauser L."/>
            <person name="Lamerdin J.E."/>
            <person name="Malfatti S."/>
            <person name="Do L."/>
            <person name="Land M.L."/>
            <person name="Pelletier D.A."/>
            <person name="Beatty J.T."/>
            <person name="Lang A.S."/>
            <person name="Tabita F.R."/>
            <person name="Gibson J.L."/>
            <person name="Hanson T.E."/>
            <person name="Bobst C."/>
            <person name="Torres y Torres J.L."/>
            <person name="Peres C."/>
            <person name="Harrison F.H."/>
            <person name="Gibson J."/>
            <person name="Harwood C.S."/>
        </authorList>
    </citation>
    <scope>NUCLEOTIDE SEQUENCE [LARGE SCALE GENOMIC DNA]</scope>
    <source>
        <strain>ATCC BAA-98 / CGA009</strain>
    </source>
</reference>
<protein>
    <recommendedName>
        <fullName evidence="1">Ferredoxin--NADP reductase</fullName>
        <shortName evidence="1">FNR</shortName>
        <shortName evidence="1">Fd-NADP(+) reductase</shortName>
        <ecNumber evidence="1">1.18.1.2</ecNumber>
    </recommendedName>
</protein>